<protein>
    <recommendedName>
        <fullName>Uncharacterized protein aq_1324</fullName>
    </recommendedName>
</protein>
<dbReference type="EMBL" id="AE000657">
    <property type="protein sequence ID" value="AAC07306.1"/>
    <property type="molecule type" value="Genomic_DNA"/>
</dbReference>
<dbReference type="PIR" id="E70414">
    <property type="entry name" value="E70414"/>
</dbReference>
<dbReference type="RefSeq" id="NP_213908.1">
    <property type="nucleotide sequence ID" value="NC_000918.1"/>
</dbReference>
<dbReference type="RefSeq" id="WP_010880846.1">
    <property type="nucleotide sequence ID" value="NC_000918.1"/>
</dbReference>
<dbReference type="STRING" id="224324.aq_1324"/>
<dbReference type="EnsemblBacteria" id="AAC07306">
    <property type="protein sequence ID" value="AAC07306"/>
    <property type="gene ID" value="aq_1324"/>
</dbReference>
<dbReference type="KEGG" id="aae:aq_1324"/>
<dbReference type="PATRIC" id="fig|224324.8.peg.1032"/>
<dbReference type="HOGENOM" id="CLU_1439285_0_0_0"/>
<dbReference type="InParanoid" id="O67344"/>
<dbReference type="OrthoDB" id="12639at2"/>
<dbReference type="Proteomes" id="UP000000798">
    <property type="component" value="Chromosome"/>
</dbReference>
<reference key="1">
    <citation type="journal article" date="1998" name="Nature">
        <title>The complete genome of the hyperthermophilic bacterium Aquifex aeolicus.</title>
        <authorList>
            <person name="Deckert G."/>
            <person name="Warren P.V."/>
            <person name="Gaasterland T."/>
            <person name="Young W.G."/>
            <person name="Lenox A.L."/>
            <person name="Graham D.E."/>
            <person name="Overbeek R."/>
            <person name="Snead M.A."/>
            <person name="Keller M."/>
            <person name="Aujay M."/>
            <person name="Huber R."/>
            <person name="Feldman R.A."/>
            <person name="Short J.M."/>
            <person name="Olsen G.J."/>
            <person name="Swanson R.V."/>
        </authorList>
    </citation>
    <scope>NUCLEOTIDE SEQUENCE [LARGE SCALE GENOMIC DNA]</scope>
    <source>
        <strain>VF5</strain>
    </source>
</reference>
<gene>
    <name type="ordered locus">aq_1324</name>
</gene>
<accession>O67344</accession>
<proteinExistence type="predicted"/>
<organism>
    <name type="scientific">Aquifex aeolicus (strain VF5)</name>
    <dbReference type="NCBI Taxonomy" id="224324"/>
    <lineage>
        <taxon>Bacteria</taxon>
        <taxon>Pseudomonadati</taxon>
        <taxon>Aquificota</taxon>
        <taxon>Aquificia</taxon>
        <taxon>Aquificales</taxon>
        <taxon>Aquificaceae</taxon>
        <taxon>Aquifex</taxon>
    </lineage>
</organism>
<name>Y1324_AQUAE</name>
<feature type="chain" id="PRO_0000186919" description="Uncharacterized protein aq_1324">
    <location>
        <begin position="1"/>
        <end position="192"/>
    </location>
</feature>
<keyword id="KW-1185">Reference proteome</keyword>
<sequence length="192" mass="22076">MNGGFYLQHRELCPACNRIALRVCEYMEPYPRVEAFCECCGYKAYDVPMKLDKETVYRILDKLSRKEIGAVCIDDRCGSTDIVKLLREGTYAEFRCLDCGAEWNSYEVKEAIKRVKNVLNYLKDGSRLAEVLKAQEGECPLCGWDIGHAHEGYLVEIQCYVCGYHNEYKEEFPKEIPPEDACPQFPRAEETG</sequence>